<feature type="chain" id="PRO_0000232551" description="Flotillin-like protein FloA">
    <location>
        <begin position="1"/>
        <end position="333"/>
    </location>
</feature>
<feature type="transmembrane region" description="Helical" evidence="1">
    <location>
        <begin position="9"/>
        <end position="29"/>
    </location>
</feature>
<gene>
    <name evidence="1" type="primary">floA</name>
    <name type="ordered locus">BT_4555</name>
</gene>
<keyword id="KW-1003">Cell membrane</keyword>
<keyword id="KW-0472">Membrane</keyword>
<keyword id="KW-1185">Reference proteome</keyword>
<keyword id="KW-0812">Transmembrane</keyword>
<keyword id="KW-1133">Transmembrane helix</keyword>
<evidence type="ECO:0000255" key="1">
    <source>
        <dbReference type="HAMAP-Rule" id="MF_01562"/>
    </source>
</evidence>
<comment type="function">
    <text evidence="1">Found in functional membrane microdomains (FMM) that may be equivalent to eukaryotic membrane rafts. FMMs are highly dynamic and increase in number as cells age. Flotillins are thought to be important factors in membrane fluidity.</text>
</comment>
<comment type="subunit">
    <text evidence="1">Homooligomerizes.</text>
</comment>
<comment type="subcellular location">
    <subcellularLocation>
        <location evidence="1">Cell membrane</location>
        <topology evidence="1">Single-pass membrane protein</topology>
    </subcellularLocation>
    <subcellularLocation>
        <location evidence="1">Membrane raft</location>
        <topology evidence="1">Single-pass membrane protein</topology>
    </subcellularLocation>
</comment>
<comment type="similarity">
    <text evidence="1">Belongs to the flotillin-like FloA family.</text>
</comment>
<organism>
    <name type="scientific">Bacteroides thetaiotaomicron (strain ATCC 29148 / DSM 2079 / JCM 5827 / CCUG 10774 / NCTC 10582 / VPI-5482 / E50)</name>
    <dbReference type="NCBI Taxonomy" id="226186"/>
    <lineage>
        <taxon>Bacteria</taxon>
        <taxon>Pseudomonadati</taxon>
        <taxon>Bacteroidota</taxon>
        <taxon>Bacteroidia</taxon>
        <taxon>Bacteroidales</taxon>
        <taxon>Bacteroidaceae</taxon>
        <taxon>Bacteroides</taxon>
    </lineage>
</organism>
<proteinExistence type="inferred from homology"/>
<dbReference type="EMBL" id="AE015928">
    <property type="protein sequence ID" value="AAO79660.1"/>
    <property type="molecule type" value="Genomic_DNA"/>
</dbReference>
<dbReference type="RefSeq" id="NP_813466.1">
    <property type="nucleotide sequence ID" value="NC_004663.1"/>
</dbReference>
<dbReference type="RefSeq" id="WP_008760314.1">
    <property type="nucleotide sequence ID" value="NZ_UYXG01000024.1"/>
</dbReference>
<dbReference type="SMR" id="Q89Z22"/>
<dbReference type="STRING" id="226186.BT_4555"/>
<dbReference type="PaxDb" id="226186-BT_4555"/>
<dbReference type="DNASU" id="1072218"/>
<dbReference type="EnsemblBacteria" id="AAO79660">
    <property type="protein sequence ID" value="AAO79660"/>
    <property type="gene ID" value="BT_4555"/>
</dbReference>
<dbReference type="GeneID" id="60925729"/>
<dbReference type="KEGG" id="bth:BT_4555"/>
<dbReference type="PATRIC" id="fig|226186.12.peg.4636"/>
<dbReference type="eggNOG" id="COG4864">
    <property type="taxonomic scope" value="Bacteria"/>
</dbReference>
<dbReference type="HOGENOM" id="CLU_836378_0_0_10"/>
<dbReference type="InParanoid" id="Q89Z22"/>
<dbReference type="OrthoDB" id="9808365at2"/>
<dbReference type="Proteomes" id="UP000001414">
    <property type="component" value="Chromosome"/>
</dbReference>
<dbReference type="GO" id="GO:0045121">
    <property type="term" value="C:membrane raft"/>
    <property type="evidence" value="ECO:0007669"/>
    <property type="project" value="UniProtKB-SubCell"/>
</dbReference>
<dbReference type="GO" id="GO:0005886">
    <property type="term" value="C:plasma membrane"/>
    <property type="evidence" value="ECO:0007669"/>
    <property type="project" value="UniProtKB-SubCell"/>
</dbReference>
<dbReference type="HAMAP" id="MF_01562">
    <property type="entry name" value="FloA"/>
    <property type="match status" value="1"/>
</dbReference>
<dbReference type="InterPro" id="IPR022853">
    <property type="entry name" value="FloA"/>
</dbReference>
<dbReference type="NCBIfam" id="NF010186">
    <property type="entry name" value="PRK13665.1"/>
    <property type="match status" value="1"/>
</dbReference>
<dbReference type="Pfam" id="PF12127">
    <property type="entry name" value="FloA"/>
    <property type="match status" value="1"/>
</dbReference>
<sequence length="333" mass="35887">METSLYLPIVLIVGGIIFLILFFHYVPFFLWLSAKVSGVNISLIQLFLMRIRNVPPYIIVPGMIEAHKAGLKNITRDELEAHYLAGGHVEKVVHALVSASKANIELSFQMATAIDLAGRDVFEAVQMSVNPKVIDTPPVTAVAKDGIQLIAKARVTVRASIKQLVGGAGEDTILARVGEGIVSSIGSSENHKSVLENPDSISKLVLRKGLDAGTAFEILSIDIADIDIGKNIGAALQIDQANADKNIAQAKAEERRAMAVASEQEMKAKAQEARAKVIEAEAEVPKAMAEAFRSGNLGIMDYYRMKNIEADTSMRENIAKPTTGGTTNQPLSK</sequence>
<accession>Q89Z22</accession>
<reference key="1">
    <citation type="journal article" date="2003" name="Science">
        <title>A genomic view of the human-Bacteroides thetaiotaomicron symbiosis.</title>
        <authorList>
            <person name="Xu J."/>
            <person name="Bjursell M.K."/>
            <person name="Himrod J."/>
            <person name="Deng S."/>
            <person name="Carmichael L.K."/>
            <person name="Chiang H.C."/>
            <person name="Hooper L.V."/>
            <person name="Gordon J.I."/>
        </authorList>
    </citation>
    <scope>NUCLEOTIDE SEQUENCE [LARGE SCALE GENOMIC DNA]</scope>
    <source>
        <strain>ATCC 29148 / DSM 2079 / JCM 5827 / CCUG 10774 / NCTC 10582 / VPI-5482 / E50</strain>
    </source>
</reference>
<name>FLOA_BACTN</name>
<protein>
    <recommendedName>
        <fullName evidence="1">Flotillin-like protein FloA</fullName>
    </recommendedName>
</protein>